<organism>
    <name type="scientific">Mus musculus</name>
    <name type="common">Mouse</name>
    <dbReference type="NCBI Taxonomy" id="10090"/>
    <lineage>
        <taxon>Eukaryota</taxon>
        <taxon>Metazoa</taxon>
        <taxon>Chordata</taxon>
        <taxon>Craniata</taxon>
        <taxon>Vertebrata</taxon>
        <taxon>Euteleostomi</taxon>
        <taxon>Mammalia</taxon>
        <taxon>Eutheria</taxon>
        <taxon>Euarchontoglires</taxon>
        <taxon>Glires</taxon>
        <taxon>Rodentia</taxon>
        <taxon>Myomorpha</taxon>
        <taxon>Muroidea</taxon>
        <taxon>Muridae</taxon>
        <taxon>Murinae</taxon>
        <taxon>Mus</taxon>
        <taxon>Mus</taxon>
    </lineage>
</organism>
<reference key="1">
    <citation type="journal article" date="2005" name="Science">
        <title>The transcriptional landscape of the mammalian genome.</title>
        <authorList>
            <person name="Carninci P."/>
            <person name="Kasukawa T."/>
            <person name="Katayama S."/>
            <person name="Gough J."/>
            <person name="Frith M.C."/>
            <person name="Maeda N."/>
            <person name="Oyama R."/>
            <person name="Ravasi T."/>
            <person name="Lenhard B."/>
            <person name="Wells C."/>
            <person name="Kodzius R."/>
            <person name="Shimokawa K."/>
            <person name="Bajic V.B."/>
            <person name="Brenner S.E."/>
            <person name="Batalov S."/>
            <person name="Forrest A.R."/>
            <person name="Zavolan M."/>
            <person name="Davis M.J."/>
            <person name="Wilming L.G."/>
            <person name="Aidinis V."/>
            <person name="Allen J.E."/>
            <person name="Ambesi-Impiombato A."/>
            <person name="Apweiler R."/>
            <person name="Aturaliya R.N."/>
            <person name="Bailey T.L."/>
            <person name="Bansal M."/>
            <person name="Baxter L."/>
            <person name="Beisel K.W."/>
            <person name="Bersano T."/>
            <person name="Bono H."/>
            <person name="Chalk A.M."/>
            <person name="Chiu K.P."/>
            <person name="Choudhary V."/>
            <person name="Christoffels A."/>
            <person name="Clutterbuck D.R."/>
            <person name="Crowe M.L."/>
            <person name="Dalla E."/>
            <person name="Dalrymple B.P."/>
            <person name="de Bono B."/>
            <person name="Della Gatta G."/>
            <person name="di Bernardo D."/>
            <person name="Down T."/>
            <person name="Engstrom P."/>
            <person name="Fagiolini M."/>
            <person name="Faulkner G."/>
            <person name="Fletcher C.F."/>
            <person name="Fukushima T."/>
            <person name="Furuno M."/>
            <person name="Futaki S."/>
            <person name="Gariboldi M."/>
            <person name="Georgii-Hemming P."/>
            <person name="Gingeras T.R."/>
            <person name="Gojobori T."/>
            <person name="Green R.E."/>
            <person name="Gustincich S."/>
            <person name="Harbers M."/>
            <person name="Hayashi Y."/>
            <person name="Hensch T.K."/>
            <person name="Hirokawa N."/>
            <person name="Hill D."/>
            <person name="Huminiecki L."/>
            <person name="Iacono M."/>
            <person name="Ikeo K."/>
            <person name="Iwama A."/>
            <person name="Ishikawa T."/>
            <person name="Jakt M."/>
            <person name="Kanapin A."/>
            <person name="Katoh M."/>
            <person name="Kawasawa Y."/>
            <person name="Kelso J."/>
            <person name="Kitamura H."/>
            <person name="Kitano H."/>
            <person name="Kollias G."/>
            <person name="Krishnan S.P."/>
            <person name="Kruger A."/>
            <person name="Kummerfeld S.K."/>
            <person name="Kurochkin I.V."/>
            <person name="Lareau L.F."/>
            <person name="Lazarevic D."/>
            <person name="Lipovich L."/>
            <person name="Liu J."/>
            <person name="Liuni S."/>
            <person name="McWilliam S."/>
            <person name="Madan Babu M."/>
            <person name="Madera M."/>
            <person name="Marchionni L."/>
            <person name="Matsuda H."/>
            <person name="Matsuzawa S."/>
            <person name="Miki H."/>
            <person name="Mignone F."/>
            <person name="Miyake S."/>
            <person name="Morris K."/>
            <person name="Mottagui-Tabar S."/>
            <person name="Mulder N."/>
            <person name="Nakano N."/>
            <person name="Nakauchi H."/>
            <person name="Ng P."/>
            <person name="Nilsson R."/>
            <person name="Nishiguchi S."/>
            <person name="Nishikawa S."/>
            <person name="Nori F."/>
            <person name="Ohara O."/>
            <person name="Okazaki Y."/>
            <person name="Orlando V."/>
            <person name="Pang K.C."/>
            <person name="Pavan W.J."/>
            <person name="Pavesi G."/>
            <person name="Pesole G."/>
            <person name="Petrovsky N."/>
            <person name="Piazza S."/>
            <person name="Reed J."/>
            <person name="Reid J.F."/>
            <person name="Ring B.Z."/>
            <person name="Ringwald M."/>
            <person name="Rost B."/>
            <person name="Ruan Y."/>
            <person name="Salzberg S.L."/>
            <person name="Sandelin A."/>
            <person name="Schneider C."/>
            <person name="Schoenbach C."/>
            <person name="Sekiguchi K."/>
            <person name="Semple C.A."/>
            <person name="Seno S."/>
            <person name="Sessa L."/>
            <person name="Sheng Y."/>
            <person name="Shibata Y."/>
            <person name="Shimada H."/>
            <person name="Shimada K."/>
            <person name="Silva D."/>
            <person name="Sinclair B."/>
            <person name="Sperling S."/>
            <person name="Stupka E."/>
            <person name="Sugiura K."/>
            <person name="Sultana R."/>
            <person name="Takenaka Y."/>
            <person name="Taki K."/>
            <person name="Tammoja K."/>
            <person name="Tan S.L."/>
            <person name="Tang S."/>
            <person name="Taylor M.S."/>
            <person name="Tegner J."/>
            <person name="Teichmann S.A."/>
            <person name="Ueda H.R."/>
            <person name="van Nimwegen E."/>
            <person name="Verardo R."/>
            <person name="Wei C.L."/>
            <person name="Yagi K."/>
            <person name="Yamanishi H."/>
            <person name="Zabarovsky E."/>
            <person name="Zhu S."/>
            <person name="Zimmer A."/>
            <person name="Hide W."/>
            <person name="Bult C."/>
            <person name="Grimmond S.M."/>
            <person name="Teasdale R.D."/>
            <person name="Liu E.T."/>
            <person name="Brusic V."/>
            <person name="Quackenbush J."/>
            <person name="Wahlestedt C."/>
            <person name="Mattick J.S."/>
            <person name="Hume D.A."/>
            <person name="Kai C."/>
            <person name="Sasaki D."/>
            <person name="Tomaru Y."/>
            <person name="Fukuda S."/>
            <person name="Kanamori-Katayama M."/>
            <person name="Suzuki M."/>
            <person name="Aoki J."/>
            <person name="Arakawa T."/>
            <person name="Iida J."/>
            <person name="Imamura K."/>
            <person name="Itoh M."/>
            <person name="Kato T."/>
            <person name="Kawaji H."/>
            <person name="Kawagashira N."/>
            <person name="Kawashima T."/>
            <person name="Kojima M."/>
            <person name="Kondo S."/>
            <person name="Konno H."/>
            <person name="Nakano K."/>
            <person name="Ninomiya N."/>
            <person name="Nishio T."/>
            <person name="Okada M."/>
            <person name="Plessy C."/>
            <person name="Shibata K."/>
            <person name="Shiraki T."/>
            <person name="Suzuki S."/>
            <person name="Tagami M."/>
            <person name="Waki K."/>
            <person name="Watahiki A."/>
            <person name="Okamura-Oho Y."/>
            <person name="Suzuki H."/>
            <person name="Kawai J."/>
            <person name="Hayashizaki Y."/>
        </authorList>
    </citation>
    <scope>NUCLEOTIDE SEQUENCE [LARGE SCALE MRNA]</scope>
    <source>
        <strain>C57BL/6J</strain>
        <tissue>Cerebellum</tissue>
        <tissue>Small intestine</tissue>
    </source>
</reference>
<reference key="2">
    <citation type="journal article" date="2004" name="Genome Res.">
        <title>The status, quality, and expansion of the NIH full-length cDNA project: the Mammalian Gene Collection (MGC).</title>
        <authorList>
            <consortium name="The MGC Project Team"/>
        </authorList>
    </citation>
    <scope>NUCLEOTIDE SEQUENCE [LARGE SCALE MRNA]</scope>
    <source>
        <tissue>Mammary tumor</tissue>
    </source>
</reference>
<reference key="3">
    <citation type="journal article" date="1996" name="J. Exp. Med.">
        <title>A single T cell receptor recognizes structurally distinct MHC/peptide complexes with high specificity.</title>
        <authorList>
            <person name="Tallquist M.D."/>
            <person name="Yun T.J."/>
            <person name="Pease L.R."/>
        </authorList>
    </citation>
    <scope>NUCLEOTIDE SEQUENCE [MRNA] OF 8-82</scope>
    <scope>PROTEIN SEQUENCE OF 61-68</scope>
    <source>
        <strain>C57BL/6J</strain>
    </source>
</reference>
<reference key="4">
    <citation type="submission" date="2007-04" db="UniProtKB">
        <authorList>
            <person name="Lubec G."/>
            <person name="Kang S.U."/>
        </authorList>
    </citation>
    <scope>PROTEIN SEQUENCE OF 36-74</scope>
    <scope>IDENTIFICATION BY MASS SPECTROMETRY</scope>
    <source>
        <strain>C57BL/6J</strain>
        <tissue>Brain</tissue>
    </source>
</reference>
<reference key="5">
    <citation type="journal article" date="2006" name="Mol. Cell. Proteomics">
        <title>Comprehensive identification of phosphorylation sites in postsynaptic density preparations.</title>
        <authorList>
            <person name="Trinidad J.C."/>
            <person name="Specht C.G."/>
            <person name="Thalhammer A."/>
            <person name="Schoepfer R."/>
            <person name="Burlingame A.L."/>
        </authorList>
    </citation>
    <scope>IDENTIFICATION BY MASS SPECTROMETRY [LARGE SCALE ANALYSIS]</scope>
    <source>
        <tissue>Brain</tissue>
    </source>
</reference>
<reference key="6">
    <citation type="journal article" date="2010" name="Cell">
        <title>A tissue-specific atlas of mouse protein phosphorylation and expression.</title>
        <authorList>
            <person name="Huttlin E.L."/>
            <person name="Jedrychowski M.P."/>
            <person name="Elias J.E."/>
            <person name="Goswami T."/>
            <person name="Rad R."/>
            <person name="Beausoleil S.A."/>
            <person name="Villen J."/>
            <person name="Haas W."/>
            <person name="Sowa M.E."/>
            <person name="Gygi S.P."/>
        </authorList>
    </citation>
    <scope>PHOSPHORYLATION [LARGE SCALE ANALYSIS] AT SER-67</scope>
    <scope>IDENTIFICATION BY MASS SPECTROMETRY [LARGE SCALE ANALYSIS]</scope>
    <source>
        <tissue>Brain</tissue>
        <tissue>Brown adipose tissue</tissue>
        <tissue>Heart</tissue>
        <tissue>Kidney</tissue>
        <tissue>Liver</tissue>
        <tissue>Lung</tissue>
        <tissue>Pancreas</tissue>
        <tissue>Testis</tissue>
    </source>
</reference>
<reference key="7">
    <citation type="journal article" date="2012" name="Cell Metab.">
        <title>NDUFA4 is a subunit of complex IV of the mammalian electron transport chain.</title>
        <authorList>
            <person name="Balsa E."/>
            <person name="Marco R."/>
            <person name="Perales-Clemente E."/>
            <person name="Szklarczyk R."/>
            <person name="Calvo E."/>
            <person name="Landazuri M.O."/>
            <person name="Enriquez J.A."/>
        </authorList>
    </citation>
    <scope>IDENTIFICATION AS CYTOCHROME C OXIDASE SUBUNIT</scope>
</reference>
<reference key="8">
    <citation type="journal article" date="2013" name="Proc. Natl. Acad. Sci. U.S.A.">
        <title>Label-free quantitative proteomics of the lysine acetylome in mitochondria identifies substrates of SIRT3 in metabolic pathways.</title>
        <authorList>
            <person name="Rardin M.J."/>
            <person name="Newman J.C."/>
            <person name="Held J.M."/>
            <person name="Cusack M.P."/>
            <person name="Sorensen D.J."/>
            <person name="Li B."/>
            <person name="Schilling B."/>
            <person name="Mooney S.D."/>
            <person name="Kahn C.R."/>
            <person name="Verdin E."/>
            <person name="Gibson B.W."/>
        </authorList>
    </citation>
    <scope>ACETYLATION [LARGE SCALE ANALYSIS] AT LYS-10</scope>
    <scope>IDENTIFICATION BY MASS SPECTROMETRY [LARGE SCALE ANALYSIS]</scope>
    <source>
        <tissue>Liver</tissue>
    </source>
</reference>
<reference key="9">
    <citation type="journal article" date="2020" name="Nat. Commun.">
        <title>MFSD7C switches mitochondrial ATP synthesis to thermogenesis in response to heme.</title>
        <authorList>
            <person name="Li Y."/>
            <person name="Ivica N.A."/>
            <person name="Dong T."/>
            <person name="Papageorgiou D.P."/>
            <person name="He Y."/>
            <person name="Brown D.R."/>
            <person name="Kleyman M."/>
            <person name="Hu G."/>
            <person name="Chen W.W."/>
            <person name="Sullivan L.B."/>
            <person name="Del Rosario A."/>
            <person name="Hammond P.T."/>
            <person name="Vander Heiden M.G."/>
            <person name="Chen J."/>
        </authorList>
    </citation>
    <scope>INTERACTION WITH FLVCR2</scope>
</reference>
<reference key="10">
    <citation type="journal article" date="2002" name="J. Exp. Med.">
        <title>Structural comparison of allogeneic and syngeneic T cell receptor-peptide-major histocompatibility complex complexes: a buried alloreactive mutation subtly alters peptide presentation substantially increasing V(beta) interactions.</title>
        <authorList>
            <person name="Luz J.G."/>
            <person name="Huang M."/>
            <person name="Garcia K.C."/>
            <person name="Rudolph M.G."/>
            <person name="Apostolopoulos V."/>
            <person name="Teyton L."/>
            <person name="Wilson I.A."/>
        </authorList>
    </citation>
    <scope>X-RAY CRYSTALLOGRAPHY (1.75 ANGSTROMS) OF 61-68 IN COMPLEX WITH THE MAJOR HISTOCOMPATIBILITY COMPLEX</scope>
</reference>
<protein>
    <recommendedName>
        <fullName>Cytochrome c oxidase subunit NDUFA4</fullName>
    </recommendedName>
</protein>
<sequence length="82" mass="9327">MLRQILGQAKKHPSLIPLFVFIGAGGTGAALYVMRLALFNPDVSWDRKNNPEPWNKLGPNEQYKFYSVNVDYSKLKKEGPDF</sequence>
<gene>
    <name type="primary">Ndufa4</name>
</gene>
<proteinExistence type="evidence at protein level"/>
<dbReference type="EMBL" id="AK005084">
    <property type="status" value="NOT_ANNOTATED_CDS"/>
    <property type="molecule type" value="mRNA"/>
</dbReference>
<dbReference type="EMBL" id="AK008357">
    <property type="protein sequence ID" value="BAB25627.1"/>
    <property type="molecule type" value="mRNA"/>
</dbReference>
<dbReference type="EMBL" id="AK008506">
    <property type="protein sequence ID" value="BAB25706.1"/>
    <property type="molecule type" value="mRNA"/>
</dbReference>
<dbReference type="EMBL" id="AK076036">
    <property type="protein sequence ID" value="BAC36137.1"/>
    <property type="molecule type" value="mRNA"/>
</dbReference>
<dbReference type="EMBL" id="BC011114">
    <property type="protein sequence ID" value="AAH11114.1"/>
    <property type="molecule type" value="mRNA"/>
</dbReference>
<dbReference type="EMBL" id="U59509">
    <property type="protein sequence ID" value="AAB03395.1"/>
    <property type="molecule type" value="mRNA"/>
</dbReference>
<dbReference type="CCDS" id="CCDS39427.1"/>
<dbReference type="RefSeq" id="NP_035016.1">
    <property type="nucleotide sequence ID" value="NM_010886.3"/>
</dbReference>
<dbReference type="PDB" id="1LEG">
    <property type="method" value="X-ray"/>
    <property type="resolution" value="1.75 A"/>
    <property type="chains" value="P=61-68"/>
</dbReference>
<dbReference type="PDB" id="1LEK">
    <property type="method" value="X-ray"/>
    <property type="resolution" value="2.15 A"/>
    <property type="chains" value="P=61-68"/>
</dbReference>
<dbReference type="PDB" id="1MWA">
    <property type="method" value="X-ray"/>
    <property type="resolution" value="2.40 A"/>
    <property type="chains" value="P/Q=61-68"/>
</dbReference>
<dbReference type="PDB" id="2CKB">
    <property type="method" value="X-ray"/>
    <property type="resolution" value="3.00 A"/>
    <property type="chains" value="P/Q=61-68"/>
</dbReference>
<dbReference type="PDBsum" id="1LEG"/>
<dbReference type="PDBsum" id="1LEK"/>
<dbReference type="PDBsum" id="1MWA"/>
<dbReference type="PDBsum" id="2CKB"/>
<dbReference type="SMR" id="Q62425"/>
<dbReference type="BioGRID" id="201717">
    <property type="interactions" value="73"/>
</dbReference>
<dbReference type="CORUM" id="Q62425"/>
<dbReference type="FunCoup" id="Q62425">
    <property type="interactions" value="1563"/>
</dbReference>
<dbReference type="IntAct" id="Q62425">
    <property type="interactions" value="9"/>
</dbReference>
<dbReference type="MINT" id="Q62425"/>
<dbReference type="STRING" id="10090.ENSMUSP00000144932"/>
<dbReference type="GlyGen" id="Q62425">
    <property type="glycosylation" value="1 site, 1 O-linked glycan (1 site)"/>
</dbReference>
<dbReference type="iPTMnet" id="Q62425"/>
<dbReference type="PhosphoSitePlus" id="Q62425"/>
<dbReference type="SwissPalm" id="Q62425"/>
<dbReference type="jPOST" id="Q62425"/>
<dbReference type="PaxDb" id="10090-ENSMUSP00000031637"/>
<dbReference type="PeptideAtlas" id="Q62425"/>
<dbReference type="ProteomicsDB" id="286165"/>
<dbReference type="Pumba" id="Q62425"/>
<dbReference type="TopDownProteomics" id="Q62425"/>
<dbReference type="Antibodypedia" id="56007">
    <property type="antibodies" value="144 antibodies from 29 providers"/>
</dbReference>
<dbReference type="DNASU" id="17992"/>
<dbReference type="Ensembl" id="ENSMUST00000204714.2">
    <property type="protein sequence ID" value="ENSMUSP00000145413.2"/>
    <property type="gene ID" value="ENSMUSG00000029632.8"/>
</dbReference>
<dbReference type="Ensembl" id="ENSMUST00000204978.3">
    <property type="protein sequence ID" value="ENSMUSP00000144932.2"/>
    <property type="gene ID" value="ENSMUSG00000029632.8"/>
</dbReference>
<dbReference type="GeneID" id="17992"/>
<dbReference type="KEGG" id="mmu:17992"/>
<dbReference type="UCSC" id="uc009ayd.1">
    <property type="organism name" value="mouse"/>
</dbReference>
<dbReference type="AGR" id="MGI:107686"/>
<dbReference type="CTD" id="4697"/>
<dbReference type="MGI" id="MGI:107686">
    <property type="gene designation" value="Ndufa4"/>
</dbReference>
<dbReference type="VEuPathDB" id="HostDB:ENSMUSG00000029632"/>
<dbReference type="eggNOG" id="ENOG502S65P">
    <property type="taxonomic scope" value="Eukaryota"/>
</dbReference>
<dbReference type="GeneTree" id="ENSGT00940000154268"/>
<dbReference type="HOGENOM" id="CLU_181002_0_0_1"/>
<dbReference type="InParanoid" id="Q62425"/>
<dbReference type="OMA" id="PWNKMSP"/>
<dbReference type="OrthoDB" id="5511684at2759"/>
<dbReference type="PhylomeDB" id="Q62425"/>
<dbReference type="TreeFam" id="TF106383"/>
<dbReference type="Reactome" id="R-MMU-5628897">
    <property type="pathway name" value="TP53 Regulates Metabolic Genes"/>
</dbReference>
<dbReference type="Reactome" id="R-MMU-611105">
    <property type="pathway name" value="Respiratory electron transport"/>
</dbReference>
<dbReference type="Reactome" id="R-MMU-9707564">
    <property type="pathway name" value="Cytoprotection by HMOX1"/>
</dbReference>
<dbReference type="Reactome" id="R-MMU-9864848">
    <property type="pathway name" value="Complex IV assembly"/>
</dbReference>
<dbReference type="BioGRID-ORCS" id="17992">
    <property type="hits" value="6 hits in 75 CRISPR screens"/>
</dbReference>
<dbReference type="CD-CODE" id="CE726F99">
    <property type="entry name" value="Postsynaptic density"/>
</dbReference>
<dbReference type="ChiTaRS" id="Ndufa4">
    <property type="organism name" value="mouse"/>
</dbReference>
<dbReference type="EvolutionaryTrace" id="Q62425"/>
<dbReference type="PRO" id="PR:Q62425"/>
<dbReference type="Proteomes" id="UP000000589">
    <property type="component" value="Chromosome 6"/>
</dbReference>
<dbReference type="RNAct" id="Q62425">
    <property type="molecule type" value="protein"/>
</dbReference>
<dbReference type="Bgee" id="ENSMUSG00000029632">
    <property type="expression patterns" value="Expressed in right kidney and 282 other cell types or tissues"/>
</dbReference>
<dbReference type="ExpressionAtlas" id="Q62425">
    <property type="expression patterns" value="baseline and differential"/>
</dbReference>
<dbReference type="GO" id="GO:0005743">
    <property type="term" value="C:mitochondrial inner membrane"/>
    <property type="evidence" value="ECO:0007005"/>
    <property type="project" value="MGI"/>
</dbReference>
<dbReference type="GO" id="GO:0005739">
    <property type="term" value="C:mitochondrion"/>
    <property type="evidence" value="ECO:0007005"/>
    <property type="project" value="MGI"/>
</dbReference>
<dbReference type="GO" id="GO:0045271">
    <property type="term" value="C:respiratory chain complex I"/>
    <property type="evidence" value="ECO:0007669"/>
    <property type="project" value="Ensembl"/>
</dbReference>
<dbReference type="GO" id="GO:0045277">
    <property type="term" value="C:respiratory chain complex IV"/>
    <property type="evidence" value="ECO:0000314"/>
    <property type="project" value="UniProtKB"/>
</dbReference>
<dbReference type="GO" id="GO:0044877">
    <property type="term" value="F:protein-containing complex binding"/>
    <property type="evidence" value="ECO:0000266"/>
    <property type="project" value="MGI"/>
</dbReference>
<dbReference type="InterPro" id="IPR010530">
    <property type="entry name" value="B12D"/>
</dbReference>
<dbReference type="PANTHER" id="PTHR14256:SF4">
    <property type="entry name" value="CYTOCHROME C OXIDASE SUBUNIT NDUFA4"/>
    <property type="match status" value="1"/>
</dbReference>
<dbReference type="PANTHER" id="PTHR14256">
    <property type="entry name" value="NADH-UBIQUINONE OXIDOREDUCTASE MLRQ SUBUNIT"/>
    <property type="match status" value="1"/>
</dbReference>
<dbReference type="Pfam" id="PF06522">
    <property type="entry name" value="B12D"/>
    <property type="match status" value="1"/>
</dbReference>
<comment type="function">
    <text evidence="1">Component of the cytochrome c oxidase, the last enzyme in the mitochondrial electron transport chain which drives oxidative phosphorylation. The respiratory chain contains 3 multisubunit complexes succinate dehydrogenase (complex II, CII), ubiquinol-cytochrome c oxidoreductase (cytochrome b-c1 complex, complex III, CIII) and cytochrome c oxidase (complex IV, CIV), that cooperate to transfer electrons derived from NADH and succinate to molecular oxygen, creating an electrochemical gradient over the inner membrane that drives transmembrane transport and the ATP synthase. Cytochrome c oxidase is the component of the respiratory chain that catalyzes the reduction of oxygen to water. Electrons originating from reduced cytochrome c in the intermembrane space (IMS) are transferred via the dinuclear copper A center (CU(A)) of subunit 2 and heme A of subunit 1 to the active site in subunit 1, a binuclear center (BNC) formed by heme A3 and copper B (CU(B)). The BNC reduces molecular oxygen to 2 water molecules unsing 4 electrons from cytochrome c in the IMS and 4 protons from the mitochondrial matrix. NDUFA4 is required for complex IV maintenance.</text>
</comment>
<comment type="subunit">
    <text evidence="1 2">Component of the cytochrome c oxidase (complex IV, CIV), a multisubunit enzyme composed of 14 subunits. The complex is composed of a catalytic core of 3 subunits MT-CO1, MT-CO2 and MT-CO3, encoded in the mitochondrial DNA, and 11 supernumerary subunits COX4I, COX5A, COX5B, COX6A, COX6B, COX6C, COX7A, COX7B, COX7C, COX8 and NDUFA4, which are encoded in the nuclear genome. The complex exists as a monomer or a dimer and forms supercomplexes (SCs) in the inner mitochondrial membrane with NADH-ubiquinone oxidoreductase (complex I, CI) and ubiquinol-cytochrome c oxidoreductase (cytochrome b-c1 complex, complex III, CIII), resulting in different assemblies (supercomplex SCI(1)III(2)IV(1) and megacomplex MCI(2)III(2)IV(2)) (By similarity). Interacts with RAB5IF (By similarity). Interacts with FLVCR2; this interaction occurs in the absence of heme and is disrupted upon heme binding.</text>
</comment>
<comment type="subcellular location">
    <subcellularLocation>
        <location evidence="1">Mitochondrion inner membrane</location>
        <topology evidence="1">Single-pass membrane protein</topology>
    </subcellularLocation>
</comment>
<comment type="similarity">
    <text evidence="3">Belongs to the complex IV NDUFA4 subunit family.</text>
</comment>
<feature type="chain" id="PRO_0000118822" description="Cytochrome c oxidase subunit NDUFA4">
    <location>
        <begin position="1"/>
        <end position="82"/>
    </location>
</feature>
<feature type="topological domain" description="Mitochondrial matrix" evidence="1">
    <location>
        <begin position="1"/>
        <end position="14"/>
    </location>
</feature>
<feature type="transmembrane region" description="Helical" evidence="1">
    <location>
        <begin position="15"/>
        <end position="37"/>
    </location>
</feature>
<feature type="topological domain" description="Mitochondrial intermembrane" evidence="1">
    <location>
        <begin position="38"/>
        <end position="82"/>
    </location>
</feature>
<feature type="modified residue" description="N6-acetyllysine" evidence="5">
    <location>
        <position position="10"/>
    </location>
</feature>
<feature type="modified residue" description="Phosphoserine" evidence="4">
    <location>
        <position position="67"/>
    </location>
</feature>
<evidence type="ECO:0000250" key="1">
    <source>
        <dbReference type="UniProtKB" id="O00483"/>
    </source>
</evidence>
<evidence type="ECO:0000269" key="2">
    <source>
    </source>
</evidence>
<evidence type="ECO:0000305" key="3"/>
<evidence type="ECO:0007744" key="4">
    <source>
    </source>
</evidence>
<evidence type="ECO:0007744" key="5">
    <source>
    </source>
</evidence>
<name>NDUA4_MOUSE</name>
<accession>Q62425</accession>
<accession>Q9CQP6</accession>
<keyword id="KW-0002">3D-structure</keyword>
<keyword id="KW-0007">Acetylation</keyword>
<keyword id="KW-0903">Direct protein sequencing</keyword>
<keyword id="KW-0249">Electron transport</keyword>
<keyword id="KW-0472">Membrane</keyword>
<keyword id="KW-0496">Mitochondrion</keyword>
<keyword id="KW-0999">Mitochondrion inner membrane</keyword>
<keyword id="KW-0597">Phosphoprotein</keyword>
<keyword id="KW-1185">Reference proteome</keyword>
<keyword id="KW-0679">Respiratory chain</keyword>
<keyword id="KW-0812">Transmembrane</keyword>
<keyword id="KW-1133">Transmembrane helix</keyword>
<keyword id="KW-0813">Transport</keyword>